<evidence type="ECO:0000255" key="1">
    <source>
        <dbReference type="HAMAP-Rule" id="MF_00378"/>
    </source>
</evidence>
<sequence>MLENFIANQATKEFSVSEISNKIKELLENNFGYIKVKGEISGLKIASSGHAYFNLKENTAILACTCWRPILAKIKFPLNDGIEVVISGKLSSYAGNSRYQLSVDNLQPAGLGAMLQILNDRKARLEKEGLFNKIRIPIPFLPDKIGVITSITGAVIKDIIHRIRERFPTRIIIWPVSVQGENSSNEIAEAIEGFNNLAEVNKPSVIIVARGGGSIEDLWSFNDEILVRAAYNSKIPIISAVGHEVDYTLIDLAADKRAPTPTAAAEFAVPVRSILNNTLHSYEKILLNNTSRLIKYHEHNIINYDKIHRYLSHYMDNRQQLLDETGFNLLDALLCFIELQETKIKSFSKERVNPAKILNYKTLELTHQTAYLSKSANNTLKNFEYKLELNSTLLASLDYNNVLKRGFAIVKGETGNFLSSKIAAANEKIFNIKFSDGEIKVVRN</sequence>
<feature type="chain" id="PRO_1000048780" description="Exodeoxyribonuclease 7 large subunit">
    <location>
        <begin position="1"/>
        <end position="444"/>
    </location>
</feature>
<dbReference type="EC" id="3.1.11.6" evidence="1"/>
<dbReference type="EMBL" id="CP000847">
    <property type="protein sequence ID" value="ABV75296.1"/>
    <property type="molecule type" value="Genomic_DNA"/>
</dbReference>
<dbReference type="RefSeq" id="WP_012149926.1">
    <property type="nucleotide sequence ID" value="NC_009881.1"/>
</dbReference>
<dbReference type="SMR" id="A8GPH1"/>
<dbReference type="STRING" id="293614.A1C_05220"/>
<dbReference type="KEGG" id="rak:A1C_05220"/>
<dbReference type="eggNOG" id="COG1570">
    <property type="taxonomic scope" value="Bacteria"/>
</dbReference>
<dbReference type="HOGENOM" id="CLU_023625_2_0_5"/>
<dbReference type="Proteomes" id="UP000006830">
    <property type="component" value="Chromosome"/>
</dbReference>
<dbReference type="GO" id="GO:0005737">
    <property type="term" value="C:cytoplasm"/>
    <property type="evidence" value="ECO:0007669"/>
    <property type="project" value="UniProtKB-SubCell"/>
</dbReference>
<dbReference type="GO" id="GO:0009318">
    <property type="term" value="C:exodeoxyribonuclease VII complex"/>
    <property type="evidence" value="ECO:0007669"/>
    <property type="project" value="InterPro"/>
</dbReference>
<dbReference type="GO" id="GO:0008855">
    <property type="term" value="F:exodeoxyribonuclease VII activity"/>
    <property type="evidence" value="ECO:0007669"/>
    <property type="project" value="UniProtKB-UniRule"/>
</dbReference>
<dbReference type="GO" id="GO:0003676">
    <property type="term" value="F:nucleic acid binding"/>
    <property type="evidence" value="ECO:0007669"/>
    <property type="project" value="InterPro"/>
</dbReference>
<dbReference type="GO" id="GO:0006308">
    <property type="term" value="P:DNA catabolic process"/>
    <property type="evidence" value="ECO:0007669"/>
    <property type="project" value="UniProtKB-UniRule"/>
</dbReference>
<dbReference type="CDD" id="cd04489">
    <property type="entry name" value="ExoVII_LU_OBF"/>
    <property type="match status" value="1"/>
</dbReference>
<dbReference type="HAMAP" id="MF_00378">
    <property type="entry name" value="Exonuc_7_L"/>
    <property type="match status" value="1"/>
</dbReference>
<dbReference type="InterPro" id="IPR003753">
    <property type="entry name" value="Exonuc_VII_L"/>
</dbReference>
<dbReference type="InterPro" id="IPR020579">
    <property type="entry name" value="Exonuc_VII_lsu_C"/>
</dbReference>
<dbReference type="InterPro" id="IPR025824">
    <property type="entry name" value="OB-fold_nuc-bd_dom"/>
</dbReference>
<dbReference type="NCBIfam" id="TIGR00237">
    <property type="entry name" value="xseA"/>
    <property type="match status" value="1"/>
</dbReference>
<dbReference type="PANTHER" id="PTHR30008">
    <property type="entry name" value="EXODEOXYRIBONUCLEASE 7 LARGE SUBUNIT"/>
    <property type="match status" value="1"/>
</dbReference>
<dbReference type="PANTHER" id="PTHR30008:SF0">
    <property type="entry name" value="EXODEOXYRIBONUCLEASE 7 LARGE SUBUNIT"/>
    <property type="match status" value="1"/>
</dbReference>
<dbReference type="Pfam" id="PF02601">
    <property type="entry name" value="Exonuc_VII_L"/>
    <property type="match status" value="1"/>
</dbReference>
<dbReference type="Pfam" id="PF13742">
    <property type="entry name" value="tRNA_anti_2"/>
    <property type="match status" value="1"/>
</dbReference>
<protein>
    <recommendedName>
        <fullName evidence="1">Exodeoxyribonuclease 7 large subunit</fullName>
        <ecNumber evidence="1">3.1.11.6</ecNumber>
    </recommendedName>
    <alternativeName>
        <fullName evidence="1">Exodeoxyribonuclease VII large subunit</fullName>
        <shortName evidence="1">Exonuclease VII large subunit</shortName>
    </alternativeName>
</protein>
<proteinExistence type="inferred from homology"/>
<comment type="function">
    <text evidence="1">Bidirectionally degrades single-stranded DNA into large acid-insoluble oligonucleotides, which are then degraded further into small acid-soluble oligonucleotides.</text>
</comment>
<comment type="catalytic activity">
    <reaction evidence="1">
        <text>Exonucleolytic cleavage in either 5'- to 3'- or 3'- to 5'-direction to yield nucleoside 5'-phosphates.</text>
        <dbReference type="EC" id="3.1.11.6"/>
    </reaction>
</comment>
<comment type="subunit">
    <text evidence="1">Heterooligomer composed of large and small subunits.</text>
</comment>
<comment type="subcellular location">
    <subcellularLocation>
        <location evidence="1">Cytoplasm</location>
    </subcellularLocation>
</comment>
<comment type="similarity">
    <text evidence="1">Belongs to the XseA family.</text>
</comment>
<name>EX7L_RICAH</name>
<keyword id="KW-0963">Cytoplasm</keyword>
<keyword id="KW-0269">Exonuclease</keyword>
<keyword id="KW-0378">Hydrolase</keyword>
<keyword id="KW-0540">Nuclease</keyword>
<organism>
    <name type="scientific">Rickettsia akari (strain Hartford)</name>
    <dbReference type="NCBI Taxonomy" id="293614"/>
    <lineage>
        <taxon>Bacteria</taxon>
        <taxon>Pseudomonadati</taxon>
        <taxon>Pseudomonadota</taxon>
        <taxon>Alphaproteobacteria</taxon>
        <taxon>Rickettsiales</taxon>
        <taxon>Rickettsiaceae</taxon>
        <taxon>Rickettsieae</taxon>
        <taxon>Rickettsia</taxon>
        <taxon>spotted fever group</taxon>
    </lineage>
</organism>
<accession>A8GPH1</accession>
<gene>
    <name evidence="1" type="primary">xseA</name>
    <name type="ordered locus">A1C_05220</name>
</gene>
<reference key="1">
    <citation type="submission" date="2007-09" db="EMBL/GenBank/DDBJ databases">
        <title>Complete genome sequence of Rickettsia akari.</title>
        <authorList>
            <person name="Madan A."/>
            <person name="Fahey J."/>
            <person name="Helton E."/>
            <person name="Ketteman M."/>
            <person name="Madan A."/>
            <person name="Rodrigues S."/>
            <person name="Sanchez A."/>
            <person name="Whiting M."/>
            <person name="Dasch G."/>
            <person name="Eremeeva M."/>
        </authorList>
    </citation>
    <scope>NUCLEOTIDE SEQUENCE [LARGE SCALE GENOMIC DNA]</scope>
    <source>
        <strain>Hartford</strain>
    </source>
</reference>